<accession>P0C114</accession>
<accession>P0A3Z6</accession>
<accession>Q44597</accession>
<accession>Q57EC9</accession>
<feature type="signal peptide" evidence="2">
    <location>
        <begin position="1"/>
        <end position="25"/>
    </location>
</feature>
<feature type="chain" id="PRO_0000026925" description="Probable periplasmic serine endoprotease DegP-like">
    <location>
        <begin position="26"/>
        <end position="513"/>
    </location>
</feature>
<feature type="domain" description="PDZ 1" evidence="3">
    <location>
        <begin position="300"/>
        <end position="391"/>
    </location>
</feature>
<feature type="domain" description="PDZ 2" evidence="3">
    <location>
        <begin position="414"/>
        <end position="500"/>
    </location>
</feature>
<feature type="region of interest" description="Disordered" evidence="4">
    <location>
        <begin position="100"/>
        <end position="135"/>
    </location>
</feature>
<feature type="region of interest" description="Serine protease">
    <location>
        <begin position="125"/>
        <end position="299"/>
    </location>
</feature>
<feature type="region of interest" description="Disordered" evidence="4">
    <location>
        <begin position="403"/>
        <end position="428"/>
    </location>
</feature>
<feature type="compositionally biased region" description="Basic and acidic residues" evidence="4">
    <location>
        <begin position="101"/>
        <end position="119"/>
    </location>
</feature>
<feature type="active site" description="Charge relay system" evidence="2">
    <location>
        <position position="152"/>
    </location>
</feature>
<feature type="active site" description="Charge relay system" evidence="2">
    <location>
        <position position="182"/>
    </location>
</feature>
<feature type="active site" description="Charge relay system" evidence="2">
    <location>
        <position position="257"/>
    </location>
</feature>
<feature type="binding site" evidence="1">
    <location>
        <begin position="255"/>
        <end position="257"/>
    </location>
    <ligand>
        <name>substrate</name>
    </ligand>
</feature>
<feature type="binding site" evidence="1">
    <location>
        <begin position="312"/>
        <end position="316"/>
    </location>
    <ligand>
        <name>substrate</name>
    </ligand>
</feature>
<name>DEGPL_BRUAB</name>
<evidence type="ECO:0000250" key="1"/>
<evidence type="ECO:0000255" key="2"/>
<evidence type="ECO:0000255" key="3">
    <source>
        <dbReference type="PROSITE-ProRule" id="PRU00143"/>
    </source>
</evidence>
<evidence type="ECO:0000256" key="4">
    <source>
        <dbReference type="SAM" id="MobiDB-lite"/>
    </source>
</evidence>
<evidence type="ECO:0000305" key="5"/>
<reference key="1">
    <citation type="journal article" date="2005" name="J. Bacteriol.">
        <title>Completion of the genome sequence of Brucella abortus and comparison to the highly similar genomes of Brucella melitensis and Brucella suis.</title>
        <authorList>
            <person name="Halling S.M."/>
            <person name="Peterson-Burch B.D."/>
            <person name="Bricker B.J."/>
            <person name="Zuerner R.L."/>
            <person name="Qing Z."/>
            <person name="Li L.-L."/>
            <person name="Kapur V."/>
            <person name="Alt D.P."/>
            <person name="Olsen S.C."/>
        </authorList>
    </citation>
    <scope>NUCLEOTIDE SEQUENCE [LARGE SCALE GENOMIC DNA]</scope>
    <source>
        <strain>9-941</strain>
    </source>
</reference>
<keyword id="KW-0378">Hydrolase</keyword>
<keyword id="KW-0574">Periplasm</keyword>
<keyword id="KW-0645">Protease</keyword>
<keyword id="KW-0677">Repeat</keyword>
<keyword id="KW-0720">Serine protease</keyword>
<keyword id="KW-0732">Signal</keyword>
<keyword id="KW-0346">Stress response</keyword>
<protein>
    <recommendedName>
        <fullName>Probable periplasmic serine endoprotease DegP-like</fullName>
        <ecNumber>3.4.21.107</ecNumber>
    </recommendedName>
    <alternativeName>
        <fullName>Protease Do</fullName>
    </alternativeName>
</protein>
<gene>
    <name type="primary">htrA</name>
    <name type="ordered locus">BruAb1_0630</name>
</gene>
<comment type="function">
    <text evidence="1">Might be efficient in the degradation of transiently denatured and unfolded proteins which accumulate in the periplasm following stress conditions.</text>
</comment>
<comment type="catalytic activity">
    <reaction>
        <text>Acts on substrates that are at least partially unfolded. The cleavage site P1 residue is normally between a pair of hydrophobic residues, such as Val-|-Val.</text>
        <dbReference type="EC" id="3.4.21.107"/>
    </reaction>
</comment>
<comment type="subcellular location">
    <subcellularLocation>
        <location evidence="5">Periplasm</location>
    </subcellularLocation>
</comment>
<comment type="similarity">
    <text evidence="5">Belongs to the peptidase S1C family.</text>
</comment>
<sequence>MSRARISNYRKGVAAVALSAALAGAFVVTGPLGALNEARAEAVHVTPPPQAGFADLVEKVRPAVVSVRVKKDVQETSNRGPQFFGPPGFDQLPDGHPLKRFFRDFGMEPRGDSRSDNRRGKANKPRPGHERPVAQGSGFVISEDGYVVTNNHVVSDGDAYTVVLDDGTELDAKLIGADPRTDLAVLKINAPKRKFVYVAFGDDNKVRVGDWVVAVGNPFGLGGTVTSGIVSARGRDIGAGPYDDFIQIDAAVNKGNSGGPAFDLSGEVIGINTAIFSPSGGSVGIAFAIPSSTAKQVVDQLIKKGSVERGWIGVQIQPVTKDIAASLGLAEEKGAIVASPQDDGPAAKAGIKAGDVITAVNGETVQDPRDLARKVANIAPGEKAALTVWRKNKAEEINVTIAAMPNDKGKSGSQSNDNDGGQGETLDSYGLTVVPSEDGKGVVVTDVDPDSDAADRGIRSGDVIVSVNNQTVKTAGDINKAITAAEKSGRKAVLLQLQSNDQSRFVALPINQE</sequence>
<organism>
    <name type="scientific">Brucella abortus biovar 1 (strain 9-941)</name>
    <dbReference type="NCBI Taxonomy" id="262698"/>
    <lineage>
        <taxon>Bacteria</taxon>
        <taxon>Pseudomonadati</taxon>
        <taxon>Pseudomonadota</taxon>
        <taxon>Alphaproteobacteria</taxon>
        <taxon>Hyphomicrobiales</taxon>
        <taxon>Brucellaceae</taxon>
        <taxon>Brucella/Ochrobactrum group</taxon>
        <taxon>Brucella</taxon>
    </lineage>
</organism>
<dbReference type="EC" id="3.4.21.107"/>
<dbReference type="EMBL" id="AE017223">
    <property type="protein sequence ID" value="AAX74005.1"/>
    <property type="molecule type" value="Genomic_DNA"/>
</dbReference>
<dbReference type="RefSeq" id="WP_002963760.1">
    <property type="nucleotide sequence ID" value="NC_006932.1"/>
</dbReference>
<dbReference type="SMR" id="P0C114"/>
<dbReference type="EnsemblBacteria" id="AAX74005">
    <property type="protein sequence ID" value="AAX74005"/>
    <property type="gene ID" value="BruAb1_0630"/>
</dbReference>
<dbReference type="KEGG" id="bmb:BruAb1_0630"/>
<dbReference type="HOGENOM" id="CLU_020120_1_0_5"/>
<dbReference type="Proteomes" id="UP000000540">
    <property type="component" value="Chromosome I"/>
</dbReference>
<dbReference type="GO" id="GO:0030288">
    <property type="term" value="C:outer membrane-bounded periplasmic space"/>
    <property type="evidence" value="ECO:0000250"/>
    <property type="project" value="UniProtKB"/>
</dbReference>
<dbReference type="GO" id="GO:0004252">
    <property type="term" value="F:serine-type endopeptidase activity"/>
    <property type="evidence" value="ECO:0000250"/>
    <property type="project" value="UniProtKB"/>
</dbReference>
<dbReference type="GO" id="GO:0006508">
    <property type="term" value="P:proteolysis"/>
    <property type="evidence" value="ECO:0007669"/>
    <property type="project" value="UniProtKB-KW"/>
</dbReference>
<dbReference type="CDD" id="cd10839">
    <property type="entry name" value="cpPDZ1_DegP-like"/>
    <property type="match status" value="1"/>
</dbReference>
<dbReference type="CDD" id="cd23084">
    <property type="entry name" value="cpPDZ2_DegP-like"/>
    <property type="match status" value="1"/>
</dbReference>
<dbReference type="FunFam" id="2.30.42.10:FF:000037">
    <property type="entry name" value="Periplasmic serine endoprotease DegP-like"/>
    <property type="match status" value="1"/>
</dbReference>
<dbReference type="FunFam" id="2.30.42.10:FF:000197">
    <property type="entry name" value="Periplasmic serine endoprotease DegP-like"/>
    <property type="match status" value="1"/>
</dbReference>
<dbReference type="FunFam" id="2.40.10.120:FF:000007">
    <property type="entry name" value="Periplasmic serine endoprotease DegP-like"/>
    <property type="match status" value="1"/>
</dbReference>
<dbReference type="Gene3D" id="2.30.42.10">
    <property type="match status" value="2"/>
</dbReference>
<dbReference type="Gene3D" id="2.40.10.120">
    <property type="match status" value="1"/>
</dbReference>
<dbReference type="InterPro" id="IPR001478">
    <property type="entry name" value="PDZ"/>
</dbReference>
<dbReference type="InterPro" id="IPR036034">
    <property type="entry name" value="PDZ_sf"/>
</dbReference>
<dbReference type="InterPro" id="IPR011782">
    <property type="entry name" value="Pept_S1C_Do"/>
</dbReference>
<dbReference type="InterPro" id="IPR009003">
    <property type="entry name" value="Peptidase_S1_PA"/>
</dbReference>
<dbReference type="InterPro" id="IPR001940">
    <property type="entry name" value="Peptidase_S1C"/>
</dbReference>
<dbReference type="NCBIfam" id="TIGR02037">
    <property type="entry name" value="degP_htrA_DO"/>
    <property type="match status" value="1"/>
</dbReference>
<dbReference type="PANTHER" id="PTHR22939">
    <property type="entry name" value="SERINE PROTEASE FAMILY S1C HTRA-RELATED"/>
    <property type="match status" value="1"/>
</dbReference>
<dbReference type="PANTHER" id="PTHR22939:SF129">
    <property type="entry name" value="SERINE PROTEASE HTRA2, MITOCHONDRIAL"/>
    <property type="match status" value="1"/>
</dbReference>
<dbReference type="Pfam" id="PF00595">
    <property type="entry name" value="PDZ"/>
    <property type="match status" value="1"/>
</dbReference>
<dbReference type="Pfam" id="PF13180">
    <property type="entry name" value="PDZ_2"/>
    <property type="match status" value="1"/>
</dbReference>
<dbReference type="Pfam" id="PF13365">
    <property type="entry name" value="Trypsin_2"/>
    <property type="match status" value="1"/>
</dbReference>
<dbReference type="PRINTS" id="PR00834">
    <property type="entry name" value="PROTEASES2C"/>
</dbReference>
<dbReference type="SMART" id="SM00228">
    <property type="entry name" value="PDZ"/>
    <property type="match status" value="2"/>
</dbReference>
<dbReference type="SUPFAM" id="SSF50156">
    <property type="entry name" value="PDZ domain-like"/>
    <property type="match status" value="2"/>
</dbReference>
<dbReference type="SUPFAM" id="SSF50494">
    <property type="entry name" value="Trypsin-like serine proteases"/>
    <property type="match status" value="1"/>
</dbReference>
<dbReference type="PROSITE" id="PS50106">
    <property type="entry name" value="PDZ"/>
    <property type="match status" value="2"/>
</dbReference>
<proteinExistence type="inferred from homology"/>